<dbReference type="EC" id="1.3.98.1"/>
<dbReference type="EMBL" id="AL766846">
    <property type="protein sequence ID" value="CAD46197.1"/>
    <property type="molecule type" value="Genomic_DNA"/>
</dbReference>
<dbReference type="RefSeq" id="WP_000254063.1">
    <property type="nucleotide sequence ID" value="NC_004368.1"/>
</dbReference>
<dbReference type="SMR" id="Q8E6L0"/>
<dbReference type="KEGG" id="san:gbs0553"/>
<dbReference type="eggNOG" id="COG0167">
    <property type="taxonomic scope" value="Bacteria"/>
</dbReference>
<dbReference type="HOGENOM" id="CLU_042042_3_0_9"/>
<dbReference type="UniPathway" id="UPA00070"/>
<dbReference type="Proteomes" id="UP000000823">
    <property type="component" value="Chromosome"/>
</dbReference>
<dbReference type="GO" id="GO:0005737">
    <property type="term" value="C:cytoplasm"/>
    <property type="evidence" value="ECO:0007669"/>
    <property type="project" value="UniProtKB-SubCell"/>
</dbReference>
<dbReference type="GO" id="GO:1990663">
    <property type="term" value="F:dihydroorotate dehydrogenase (fumarate) activity"/>
    <property type="evidence" value="ECO:0007669"/>
    <property type="project" value="UniProtKB-EC"/>
</dbReference>
<dbReference type="GO" id="GO:0006207">
    <property type="term" value="P:'de novo' pyrimidine nucleobase biosynthetic process"/>
    <property type="evidence" value="ECO:0007669"/>
    <property type="project" value="InterPro"/>
</dbReference>
<dbReference type="GO" id="GO:0044205">
    <property type="term" value="P:'de novo' UMP biosynthetic process"/>
    <property type="evidence" value="ECO:0007669"/>
    <property type="project" value="UniProtKB-UniRule"/>
</dbReference>
<dbReference type="CDD" id="cd04741">
    <property type="entry name" value="DHOD_1A_like"/>
    <property type="match status" value="1"/>
</dbReference>
<dbReference type="FunFam" id="3.20.20.70:FF:000027">
    <property type="entry name" value="Dihydropyrimidine dehydrogenase [NADP(+)]"/>
    <property type="match status" value="1"/>
</dbReference>
<dbReference type="Gene3D" id="3.20.20.70">
    <property type="entry name" value="Aldolase class I"/>
    <property type="match status" value="1"/>
</dbReference>
<dbReference type="HAMAP" id="MF_00224">
    <property type="entry name" value="DHO_dh_type1"/>
    <property type="match status" value="1"/>
</dbReference>
<dbReference type="InterPro" id="IPR013785">
    <property type="entry name" value="Aldolase_TIM"/>
</dbReference>
<dbReference type="InterPro" id="IPR050074">
    <property type="entry name" value="DHO_dehydrogenase"/>
</dbReference>
<dbReference type="InterPro" id="IPR033886">
    <property type="entry name" value="DHOD_1A"/>
</dbReference>
<dbReference type="InterPro" id="IPR024920">
    <property type="entry name" value="Dihydroorotate_DH_1"/>
</dbReference>
<dbReference type="InterPro" id="IPR012135">
    <property type="entry name" value="Dihydroorotate_DH_1_2"/>
</dbReference>
<dbReference type="InterPro" id="IPR005720">
    <property type="entry name" value="Dihydroorotate_DH_cat"/>
</dbReference>
<dbReference type="InterPro" id="IPR001295">
    <property type="entry name" value="Dihydroorotate_DH_CS"/>
</dbReference>
<dbReference type="NCBIfam" id="NF002702">
    <property type="entry name" value="PRK02506.1"/>
    <property type="match status" value="1"/>
</dbReference>
<dbReference type="PANTHER" id="PTHR48109:SF1">
    <property type="entry name" value="DIHYDROOROTATE DEHYDROGENASE (FUMARATE)"/>
    <property type="match status" value="1"/>
</dbReference>
<dbReference type="PANTHER" id="PTHR48109">
    <property type="entry name" value="DIHYDROOROTATE DEHYDROGENASE (QUINONE), MITOCHONDRIAL-RELATED"/>
    <property type="match status" value="1"/>
</dbReference>
<dbReference type="Pfam" id="PF01180">
    <property type="entry name" value="DHO_dh"/>
    <property type="match status" value="1"/>
</dbReference>
<dbReference type="PIRSF" id="PIRSF000164">
    <property type="entry name" value="DHO_oxidase"/>
    <property type="match status" value="1"/>
</dbReference>
<dbReference type="SUPFAM" id="SSF51395">
    <property type="entry name" value="FMN-linked oxidoreductases"/>
    <property type="match status" value="1"/>
</dbReference>
<dbReference type="PROSITE" id="PS00912">
    <property type="entry name" value="DHODEHASE_2"/>
    <property type="match status" value="1"/>
</dbReference>
<evidence type="ECO:0000250" key="1"/>
<evidence type="ECO:0000305" key="2"/>
<name>PYRDA_STRA3</name>
<accession>Q8E6L0</accession>
<comment type="function">
    <text evidence="1">Catalyzes the conversion of dihydroorotate to orotate with fumarate as the electron acceptor.</text>
</comment>
<comment type="catalytic activity">
    <reaction>
        <text>(S)-dihydroorotate + fumarate = orotate + succinate</text>
        <dbReference type="Rhea" id="RHEA:30059"/>
        <dbReference type="ChEBI" id="CHEBI:29806"/>
        <dbReference type="ChEBI" id="CHEBI:30031"/>
        <dbReference type="ChEBI" id="CHEBI:30839"/>
        <dbReference type="ChEBI" id="CHEBI:30864"/>
        <dbReference type="EC" id="1.3.98.1"/>
    </reaction>
</comment>
<comment type="cofactor">
    <cofactor evidence="1">
        <name>FMN</name>
        <dbReference type="ChEBI" id="CHEBI:58210"/>
    </cofactor>
    <text evidence="1">Binds 1 FMN per subunit.</text>
</comment>
<comment type="pathway">
    <text>Pyrimidine metabolism; UMP biosynthesis via de novo pathway.</text>
</comment>
<comment type="subunit">
    <text evidence="1">Homodimer.</text>
</comment>
<comment type="subcellular location">
    <subcellularLocation>
        <location evidence="1">Cytoplasm</location>
    </subcellularLocation>
</comment>
<comment type="similarity">
    <text evidence="2">Belongs to the dihydroorotate dehydrogenase family. Type 1 subfamily.</text>
</comment>
<sequence>MVSLKTEIAGFSFDNCLMNAAGIYCMTKEELLAIENSEAGSFVTKTGTLEAREGNPQPRYADTDWGSINSMGLPNKGIDYYLDFVTELQDQDNSKNHVLSLVGLSPEETHIILKKVENSSYNGLIELNLSCPNVPGKPQIAYDFEMTDLILSEIFSYYQKPLGIKLPPYFDIVHFDQAATIFNKYPLAFINCVNSIGNGLVIDDETVVIKPKNGFGGIGGDFIKPTALANVHAFYKRLNPSIKIIGTGGVKNGRDAFEHILCGASMVQIGTALQKEGPEIFQRVSRELKEIMADKGYQSLEDFRGQLNYL</sequence>
<protein>
    <recommendedName>
        <fullName>Putative dihydroorotate dehydrogenase A (fumarate)</fullName>
        <shortName>DHOD A</shortName>
        <shortName>DHODase A</shortName>
        <shortName>DHOdehase A</shortName>
        <ecNumber>1.3.98.1</ecNumber>
    </recommendedName>
</protein>
<organism>
    <name type="scientific">Streptococcus agalactiae serotype III (strain NEM316)</name>
    <dbReference type="NCBI Taxonomy" id="211110"/>
    <lineage>
        <taxon>Bacteria</taxon>
        <taxon>Bacillati</taxon>
        <taxon>Bacillota</taxon>
        <taxon>Bacilli</taxon>
        <taxon>Lactobacillales</taxon>
        <taxon>Streptococcaceae</taxon>
        <taxon>Streptococcus</taxon>
    </lineage>
</organism>
<gene>
    <name type="primary">pyrD</name>
    <name type="ordered locus">gbs0553</name>
</gene>
<proteinExistence type="inferred from homology"/>
<keyword id="KW-0963">Cytoplasm</keyword>
<keyword id="KW-0285">Flavoprotein</keyword>
<keyword id="KW-0288">FMN</keyword>
<keyword id="KW-0560">Oxidoreductase</keyword>
<keyword id="KW-0665">Pyrimidine biosynthesis</keyword>
<reference key="1">
    <citation type="journal article" date="2002" name="Mol. Microbiol.">
        <title>Genome sequence of Streptococcus agalactiae, a pathogen causing invasive neonatal disease.</title>
        <authorList>
            <person name="Glaser P."/>
            <person name="Rusniok C."/>
            <person name="Buchrieser C."/>
            <person name="Chevalier F."/>
            <person name="Frangeul L."/>
            <person name="Msadek T."/>
            <person name="Zouine M."/>
            <person name="Couve E."/>
            <person name="Lalioui L."/>
            <person name="Poyart C."/>
            <person name="Trieu-Cuot P."/>
            <person name="Kunst F."/>
        </authorList>
    </citation>
    <scope>NUCLEOTIDE SEQUENCE [LARGE SCALE GENOMIC DNA]</scope>
    <source>
        <strain>NEM316</strain>
    </source>
</reference>
<feature type="chain" id="PRO_1000100228" description="Putative dihydroorotate dehydrogenase A (fumarate)">
    <location>
        <begin position="1"/>
        <end position="310"/>
    </location>
</feature>
<feature type="active site" description="Nucleophile">
    <location>
        <position position="131"/>
    </location>
</feature>
<feature type="binding site" evidence="1">
    <location>
        <begin position="45"/>
        <end position="46"/>
    </location>
    <ligand>
        <name>FMN</name>
        <dbReference type="ChEBI" id="CHEBI:58210"/>
    </ligand>
</feature>
<feature type="binding site" evidence="1">
    <location>
        <position position="45"/>
    </location>
    <ligand>
        <name>substrate</name>
    </ligand>
</feature>
<feature type="binding site" evidence="1">
    <location>
        <begin position="69"/>
        <end position="73"/>
    </location>
    <ligand>
        <name>substrate</name>
    </ligand>
</feature>
<feature type="binding site" evidence="1">
    <location>
        <position position="128"/>
    </location>
    <ligand>
        <name>FMN</name>
        <dbReference type="ChEBI" id="CHEBI:58210"/>
    </ligand>
</feature>
<feature type="binding site" evidence="1">
    <location>
        <position position="128"/>
    </location>
    <ligand>
        <name>substrate</name>
    </ligand>
</feature>
<feature type="binding site" evidence="1">
    <location>
        <position position="165"/>
    </location>
    <ligand>
        <name>FMN</name>
        <dbReference type="ChEBI" id="CHEBI:58210"/>
    </ligand>
</feature>
<feature type="binding site" evidence="1">
    <location>
        <position position="193"/>
    </location>
    <ligand>
        <name>FMN</name>
        <dbReference type="ChEBI" id="CHEBI:58210"/>
    </ligand>
</feature>
<feature type="binding site" evidence="1">
    <location>
        <begin position="194"/>
        <end position="195"/>
    </location>
    <ligand>
        <name>substrate</name>
    </ligand>
</feature>
<feature type="binding site" evidence="1">
    <location>
        <position position="220"/>
    </location>
    <ligand>
        <name>FMN</name>
        <dbReference type="ChEBI" id="CHEBI:58210"/>
    </ligand>
</feature>
<feature type="binding site" evidence="1">
    <location>
        <begin position="248"/>
        <end position="249"/>
    </location>
    <ligand>
        <name>FMN</name>
        <dbReference type="ChEBI" id="CHEBI:58210"/>
    </ligand>
</feature>
<feature type="binding site" evidence="1">
    <location>
        <begin position="270"/>
        <end position="271"/>
    </location>
    <ligand>
        <name>FMN</name>
        <dbReference type="ChEBI" id="CHEBI:58210"/>
    </ligand>
</feature>